<dbReference type="EC" id="2.7.7.38" evidence="1"/>
<dbReference type="EMBL" id="CP000440">
    <property type="protein sequence ID" value="ABI88151.1"/>
    <property type="molecule type" value="Genomic_DNA"/>
</dbReference>
<dbReference type="RefSeq" id="WP_011657743.1">
    <property type="nucleotide sequence ID" value="NC_008390.1"/>
</dbReference>
<dbReference type="SMR" id="Q0BCH2"/>
<dbReference type="GeneID" id="93085203"/>
<dbReference type="KEGG" id="bam:Bamb_2595"/>
<dbReference type="PATRIC" id="fig|339670.21.peg.2307"/>
<dbReference type="eggNOG" id="COG1212">
    <property type="taxonomic scope" value="Bacteria"/>
</dbReference>
<dbReference type="UniPathway" id="UPA00030"/>
<dbReference type="UniPathway" id="UPA00358">
    <property type="reaction ID" value="UER00476"/>
</dbReference>
<dbReference type="Proteomes" id="UP000000662">
    <property type="component" value="Chromosome 1"/>
</dbReference>
<dbReference type="GO" id="GO:0005829">
    <property type="term" value="C:cytosol"/>
    <property type="evidence" value="ECO:0007669"/>
    <property type="project" value="TreeGrafter"/>
</dbReference>
<dbReference type="GO" id="GO:0008690">
    <property type="term" value="F:3-deoxy-manno-octulosonate cytidylyltransferase activity"/>
    <property type="evidence" value="ECO:0007669"/>
    <property type="project" value="UniProtKB-UniRule"/>
</dbReference>
<dbReference type="GO" id="GO:0033468">
    <property type="term" value="P:CMP-keto-3-deoxy-D-manno-octulosonic acid biosynthetic process"/>
    <property type="evidence" value="ECO:0007669"/>
    <property type="project" value="UniProtKB-UniRule"/>
</dbReference>
<dbReference type="GO" id="GO:0009103">
    <property type="term" value="P:lipopolysaccharide biosynthetic process"/>
    <property type="evidence" value="ECO:0007669"/>
    <property type="project" value="UniProtKB-UniRule"/>
</dbReference>
<dbReference type="CDD" id="cd02517">
    <property type="entry name" value="CMP-KDO-Synthetase"/>
    <property type="match status" value="1"/>
</dbReference>
<dbReference type="FunFam" id="3.90.550.10:FF:000011">
    <property type="entry name" value="3-deoxy-manno-octulosonate cytidylyltransferase"/>
    <property type="match status" value="1"/>
</dbReference>
<dbReference type="Gene3D" id="3.90.550.10">
    <property type="entry name" value="Spore Coat Polysaccharide Biosynthesis Protein SpsA, Chain A"/>
    <property type="match status" value="1"/>
</dbReference>
<dbReference type="HAMAP" id="MF_00057">
    <property type="entry name" value="KdsB"/>
    <property type="match status" value="1"/>
</dbReference>
<dbReference type="InterPro" id="IPR003329">
    <property type="entry name" value="Cytidylyl_trans"/>
</dbReference>
<dbReference type="InterPro" id="IPR004528">
    <property type="entry name" value="KdsB"/>
</dbReference>
<dbReference type="InterPro" id="IPR029044">
    <property type="entry name" value="Nucleotide-diphossugar_trans"/>
</dbReference>
<dbReference type="NCBIfam" id="TIGR00466">
    <property type="entry name" value="kdsB"/>
    <property type="match status" value="1"/>
</dbReference>
<dbReference type="NCBIfam" id="NF003952">
    <property type="entry name" value="PRK05450.1-5"/>
    <property type="match status" value="1"/>
</dbReference>
<dbReference type="NCBIfam" id="NF009905">
    <property type="entry name" value="PRK13368.1"/>
    <property type="match status" value="1"/>
</dbReference>
<dbReference type="PANTHER" id="PTHR42866">
    <property type="entry name" value="3-DEOXY-MANNO-OCTULOSONATE CYTIDYLYLTRANSFERASE"/>
    <property type="match status" value="1"/>
</dbReference>
<dbReference type="PANTHER" id="PTHR42866:SF2">
    <property type="entry name" value="3-DEOXY-MANNO-OCTULOSONATE CYTIDYLYLTRANSFERASE, MITOCHONDRIAL"/>
    <property type="match status" value="1"/>
</dbReference>
<dbReference type="Pfam" id="PF02348">
    <property type="entry name" value="CTP_transf_3"/>
    <property type="match status" value="1"/>
</dbReference>
<dbReference type="SUPFAM" id="SSF53448">
    <property type="entry name" value="Nucleotide-diphospho-sugar transferases"/>
    <property type="match status" value="1"/>
</dbReference>
<proteinExistence type="inferred from homology"/>
<name>KDSB1_BURCM</name>
<organism>
    <name type="scientific">Burkholderia ambifaria (strain ATCC BAA-244 / DSM 16087 / CCUG 44356 / LMG 19182 / AMMD)</name>
    <name type="common">Burkholderia cepacia (strain AMMD)</name>
    <dbReference type="NCBI Taxonomy" id="339670"/>
    <lineage>
        <taxon>Bacteria</taxon>
        <taxon>Pseudomonadati</taxon>
        <taxon>Pseudomonadota</taxon>
        <taxon>Betaproteobacteria</taxon>
        <taxon>Burkholderiales</taxon>
        <taxon>Burkholderiaceae</taxon>
        <taxon>Burkholderia</taxon>
        <taxon>Burkholderia cepacia complex</taxon>
    </lineage>
</organism>
<protein>
    <recommendedName>
        <fullName evidence="1">3-deoxy-manno-octulosonate cytidylyltransferase 1</fullName>
        <ecNumber evidence="1">2.7.7.38</ecNumber>
    </recommendedName>
    <alternativeName>
        <fullName evidence="1">CMP-2-keto-3-deoxyoctulosonic acid synthase 1</fullName>
        <shortName evidence="1">CKS 1</shortName>
        <shortName evidence="1">CMP-KDO synthase 1</shortName>
    </alternativeName>
</protein>
<accession>Q0BCH2</accession>
<reference key="1">
    <citation type="submission" date="2006-08" db="EMBL/GenBank/DDBJ databases">
        <title>Complete sequence of chromosome 1 of Burkholderia cepacia AMMD.</title>
        <authorList>
            <person name="Copeland A."/>
            <person name="Lucas S."/>
            <person name="Lapidus A."/>
            <person name="Barry K."/>
            <person name="Detter J.C."/>
            <person name="Glavina del Rio T."/>
            <person name="Hammon N."/>
            <person name="Israni S."/>
            <person name="Pitluck S."/>
            <person name="Bruce D."/>
            <person name="Chain P."/>
            <person name="Malfatti S."/>
            <person name="Shin M."/>
            <person name="Vergez L."/>
            <person name="Schmutz J."/>
            <person name="Larimer F."/>
            <person name="Land M."/>
            <person name="Hauser L."/>
            <person name="Kyrpides N."/>
            <person name="Kim E."/>
            <person name="Parke J."/>
            <person name="Coenye T."/>
            <person name="Konstantinidis K."/>
            <person name="Ramette A."/>
            <person name="Tiedje J."/>
            <person name="Richardson P."/>
        </authorList>
    </citation>
    <scope>NUCLEOTIDE SEQUENCE [LARGE SCALE GENOMIC DNA]</scope>
    <source>
        <strain>ATCC BAA-244 / DSM 16087 / CCUG 44356 / LMG 19182 / AMMD</strain>
    </source>
</reference>
<feature type="chain" id="PRO_0000370019" description="3-deoxy-manno-octulosonate cytidylyltransferase 1">
    <location>
        <begin position="1"/>
        <end position="263"/>
    </location>
</feature>
<keyword id="KW-0963">Cytoplasm</keyword>
<keyword id="KW-0448">Lipopolysaccharide biosynthesis</keyword>
<keyword id="KW-0548">Nucleotidyltransferase</keyword>
<keyword id="KW-0808">Transferase</keyword>
<gene>
    <name evidence="1" type="primary">kdsB1</name>
    <name type="ordered locus">Bamb_2595</name>
</gene>
<evidence type="ECO:0000255" key="1">
    <source>
        <dbReference type="HAMAP-Rule" id="MF_00057"/>
    </source>
</evidence>
<comment type="function">
    <text evidence="1">Activates KDO (a required 8-carbon sugar) for incorporation into bacterial lipopolysaccharide in Gram-negative bacteria.</text>
</comment>
<comment type="catalytic activity">
    <reaction evidence="1">
        <text>3-deoxy-alpha-D-manno-oct-2-ulosonate + CTP = CMP-3-deoxy-beta-D-manno-octulosonate + diphosphate</text>
        <dbReference type="Rhea" id="RHEA:23448"/>
        <dbReference type="ChEBI" id="CHEBI:33019"/>
        <dbReference type="ChEBI" id="CHEBI:37563"/>
        <dbReference type="ChEBI" id="CHEBI:85986"/>
        <dbReference type="ChEBI" id="CHEBI:85987"/>
        <dbReference type="EC" id="2.7.7.38"/>
    </reaction>
</comment>
<comment type="pathway">
    <text evidence="1">Nucleotide-sugar biosynthesis; CMP-3-deoxy-D-manno-octulosonate biosynthesis; CMP-3-deoxy-D-manno-octulosonate from 3-deoxy-D-manno-octulosonate and CTP: step 1/1.</text>
</comment>
<comment type="pathway">
    <text evidence="1">Bacterial outer membrane biogenesis; lipopolysaccharide biosynthesis.</text>
</comment>
<comment type="subcellular location">
    <subcellularLocation>
        <location evidence="1">Cytoplasm</location>
    </subcellularLocation>
</comment>
<comment type="similarity">
    <text evidence="1">Belongs to the KdsB family.</text>
</comment>
<sequence>MTHPQPFIAVIPARLASTRLPNKPLADLGGKPMVVRVAERAREAGAQQVLIASDAQSVLDAARDHGFEAVLTRADHPSGTDRLAEVAATFGWSDDTVVVNVQGDEPLIDPVLVRDVASHLAAHPDCAIATAAHPIHDAADVFNPNVVKVALDARNVAMYFSRAPIPWSRDAYLPHWPDVSAMPAPAFPVHRHIGLYAYRARFLRTYPSLAQAPVEQAEQLEQLRAMWHGERIAVLITEHAPEAGIDTPADLARVQALFRPGSK</sequence>